<accession>Q05794</accession>
<accession>Q67800</accession>
<accession>Q67801</accession>
<accession>Q67802</accession>
<accession>Q67803</accession>
<accession>Q67804</accession>
<accession>Q67805</accession>
<accession>Q67806</accession>
<accession>Q67807</accession>
<name>POLG_HAVHA</name>
<organismHost>
    <name type="scientific">Homo sapiens</name>
    <name type="common">Human</name>
    <dbReference type="NCBI Taxonomy" id="9606"/>
</organismHost>
<sequence length="2052" mass="231976">MNMSKQGIFQTVGSGLDHILSLADIEEEQMIQSVDRTAVTGASYFTSVDQSSVHTAEVGSHQIEPLKTSVDKPGSKKTQGEKFFLIHSADWLTTHALFHEVAKLDVVKLLYNEQFAVQGLLRYHTYARFGIEIQVQINPTPFQQGGLICAMVPGDQSYGSIASLTVYPHGLLNCNINNVVRIKVPFIYTRGAYHFKDPQYPVWELTIRVWSELNIGTGTSAYTSLNVLARFTDLELHGLTPLSTQMMRNEFRVSTTENVVNLSNYEDARAKMSFALDQEDWKSDPSQGGGIKITHFTTWTSIPTLAAQFPFNASDSVGQQIKVIPVDPYFFQMTNTNPDQKCITALASICQMFCFWRGDLVFDFQVFPTKYHSGRLLFCFVPGNELIDVTGITLKQATTAPCAVMDITGVQSTLRFRVPWISDTPYRVNRYTKSAHQKGEYTAIGKLIVYCYNRLTSPSNVASHVRVNVYLSAINLECFAPLYHAMDVTTQVGDDSGGFSTTVSTEQNVPDPQVGIKGKANRGKMDVSGVQAPVGAITTIEDPVLAKKVPETFPELKPGESRHTSDHMSIYKFMGRSHFLCTFTFNSNNKEYTFPITLSSTSNPPHGLPSTLRWFFNLFQLYRGPLDLTIIITGATDVDGMAWFTPVGLAVDTPWVEKKSALSIDYKTALGAVRFNTRRTGNIQIRLPWYSYLYAVSGALDGLGDKTDSTFGLVSIQIANYNHSDEYLSFSCYLSVTEQSEFYFPRAPLNSNAMLSTESMMSRIAAGDLESSVDDPRSEEDRRFESHIECRKPYKELRLEVGKQRLKYAQEELSNEVLPPPRKMKGLFSQAKISLFYTEEHEIMKFSWRGVTADTRALRRFGFSLAAGRSVWTLEMDAGVLTGRLIRLNDEKWTEMKDDKIVSLIEKFTSNKYWSKVNFPHGMLDLEEIAANSKDFPNMSETDLCFLLHWLNPKKINLADRMLGLSGVQEIKEQGVGLIAECRTFLDSIAGTLKSMIFGFHHSVTVEIINIVLCFIKSGILLYVIQQLNQDEHSHIIGLLRVMNYADIGCSVISCGKVFSKMLETVFNWQMDSRMMELRTQSFSNWLRDICSGITIFKSFKDAIYWLCTKLKDFYEVNYGKKKDVLNILKDNQQKIEKAIEEADNFCILQIQDVEKFDQYQTSNWSNPSPKTVYVKEAIDRRLHFKVEVKPASFFKNPHNDMLNVNLAKTNDAIKDMSCVDLIMDGHNISLMDLLSSLVMTVEIRKQNMSEFMELWSQGISDDDSAVAEFFQSFPSGEPSNSKLSSFFQSVTNHKWVAVGAAVGILGLLVGGWFVYKHFSRKEEEPIPAEGVYHGVTKPKQVIKLDADPVESQSTLEIAGLVRKNLVQFGVGEKNGCVRWVMNALGVKDDWLLVPSHAYKFEKDYEMMEFYFNRGGTYYSISAGNVVIQSLDVGFQDVVLMKVPTIPKFRDITQHFIKKGDVPRALNRLATLVTTVNGTPMLISEGPLKMEEKATYVHKKNDGTTVDLTVDQAWRGKGEGLPGMCGGALVSSNQSIQNAILGIHVAGGNSILVAKLITQEMFQNIDKKIESQRIMKVEFTQCSMNVVSKTLFRKSPIHHHIDKTMINFPAAMPFSKAEIDPMAMMLSKYSLPIVEEPEDYKEASVFYQNKIVGKTQLVDDFLDLDMAITGAPGIDAINMDSSPGFPYVQEKLTKRDLIWLDENGLLLGVHPRLAQRILFNTVMMENCSDLDVVFTTCPKDELRPLEKVLESKTRAIDACPLDYTILCRMYWGPAISYFHLNPGFHTGVAIGIDPDRQWDELFKTMIRFGDVGLDLDFSAFDASLSPFMIREAGRIMSELSGTPSHFGTALINTIIYSKHLLYNCCYHVCGSMPSGSPCTALLNSIINNINLYYVFSKIFGKSPVFFCQALRILCYGDDVLIVFSRDVQIDNLDLIGQKIVDEFKKLGMTATSADKNVPQLKPVSELTFLKRSFNLVEDRIRPAISEKTIWSLIAWQRSNAEFEQNLENAQWFAFMHGYEFYQKFYYFVQSCLEKEMIEYRLKSYDWWRMRFY</sequence>
<comment type="function">
    <molecule>Capsid protein VP1</molecule>
    <text evidence="4">Capsid proteins VP1, VP2, and VP3 form a closed capsid enclosing the viral positive strand RNA genome. All these proteins contain a beta-sheet structure called beta-barrel jelly roll. Together they form an icosahedral capsid (T=3) composed of 60 copies of each VP1, VP2, and VP3, with a diameter of approximately 300 Angstroms. VP1 is situated at the 12 fivefold axes, whereas VP2 and VP3 are located at the quasi-sixfold axes. The naked capsid interacts with the host receptor HAVCR1 to provide virion attachment to and probably entry into the target cell.</text>
</comment>
<comment type="function">
    <molecule>Capsid protein VP2</molecule>
    <text evidence="4">Capsid proteins VP1, VP2, and VP3 form a closed capsid enclosing the viral positive strand RNA genome. All these proteins contain a beta-sheet structure called beta-barrel jelly roll. Together they form an icosahedral capsid (T=3) composed of 60 copies of each VP1, VP2, and VP3, with a diameter of approximately 300 Angstroms. VP1 is situated at the 12 fivefold axes, whereas VP2 and VP3 are located at the quasi-sixfold axes. The naked capsid interacts with the host receptor HAVCR1 to provide virion attachment to and probably entry into the target cell.</text>
</comment>
<comment type="function">
    <molecule>Capsid protein VP3</molecule>
    <text evidence="4">Capsid proteins VP1, VP2, and VP3 form a closed capsid enclosing the viral positive strand RNA genome. All these proteins contain a beta-sheet structure called beta-barrel jelly roll. Together they form an icosahedral capsid (T=3) composed of 60 copies of each VP1, VP2, and VP3, with a diameter of approximately 300 Angstroms. VP1 is situated at the 12 fivefold axes, whereas VP2 and VP3 are located at the quasi-sixfold axes. The naked capsid interacts with the host receptor HAVCR1 to provide virion attachment to and probably entry into the target cell.</text>
</comment>
<comment type="function">
    <molecule>Capsid protein VP0</molecule>
    <text evidence="4">VP0 precursor is a component of the immature procapsids.</text>
</comment>
<comment type="function">
    <molecule>Capsid protein VP4</molecule>
    <text evidence="4">Plays a role in the assembly of the 12 pentamers into an icosahedral structure. Has not been detected in mature virions, supposedly owing to its small size.</text>
</comment>
<comment type="function">
    <molecule>Protein VP1-2A</molecule>
    <text evidence="4">Precursor component of immature procapsids that corresponds to an extended form of the structural protein VP1. After maturation, possibly by the host Cathepsin L, the assembly signal 2A is cleaved to give rise to the mature VP1 protein.</text>
</comment>
<comment type="function">
    <molecule>Protein 2B</molecule>
    <text evidence="4">Functions as a viroporin. Affects membrane integrity and causes an increase in membrane permeability. Involved in host intracellular membrane rearrangements probably to give rise to the viral factories. Does not disrupt calcium homeostasis or glycoprotein trafficking. Antagonizes the innate immune response of the host by suppressing IFN-beta synthesis, which it achieves by interfering with the RIG-I/IFIH1 pathway.</text>
</comment>
<comment type="function">
    <molecule>Protein 2BC</molecule>
    <text evidence="4">Affects membrane integrity and causes an increase in membrane permeability.</text>
</comment>
<comment type="function">
    <molecule>Protein 2C</molecule>
    <text evidence="4">Associates with and induces structural rearrangements of intracellular membranes. Displays RNA-binding activity.</text>
</comment>
<comment type="function">
    <molecule>Protein 3ABC</molecule>
    <text evidence="4">The precursor 3ABC is targeted to the mitochondrial membrane where protease 3C activity cleaves and inhibits the host antiviral protein MAVS, thereby disrupting activation of IRF3 through the IFIH1/MDA5 pathway. In vivo, the protease activity of 3ABC precursor is more efficient in cleaving the 2BC precursor than that of protein 3C. The 3ABC precursor may therefore play a role in the proteolytic processing of the polyprotein. Possible viroporin.</text>
</comment>
<comment type="function">
    <molecule>Protein 3AB</molecule>
    <text evidence="4">Interacts with the 3CD precursor and with RNA structures found at both the 5'- and 3'-termini of the viral genome. Since the 3AB precursor contains the hydrophobic domain 3A, it probably anchors the whole viral replicase complex to intracellular membranes on which viral RNA synthesis occurs.</text>
</comment>
<comment type="function">
    <molecule>Protein 3A</molecule>
    <text evidence="4">May serve as membrane anchor to the 3AB and 3ABC precursors via its hydrophobic domain. May interact with RNA.</text>
</comment>
<comment type="function">
    <molecule>Viral protein genome-linked</molecule>
    <text evidence="2 4">Acts as a primer for viral RNA replication and remains covalently bound to viral genomic RNA. VPg is uridylylated prior to priming replication into VPg-pUpU. The VPg-pUpU is then used as primer on the genomic RNA poly(A) by the RNA-dependent RNA polymerase to replicate the viral genome.</text>
</comment>
<comment type="function">
    <molecule>Protease 3C</molecule>
    <text evidence="4">Cysteine protease that generates mature viral proteins from the precursor polyprotein. In addition to its proteolytic activity, it binds to viral RNA, and thus influences viral genome replication. RNA and substrate bind cooperatively to the protease. Cleaves IKBKG/NEMO to impair innate immune signaling. Cleaves host PABPC1 which may participate in the switch of viral translation to RNA synthesis.</text>
</comment>
<comment type="function">
    <molecule>Protein 3CD</molecule>
    <text evidence="4">Interacts with the 3AB precursor and with RNA structures found at both the 5'- and 3'-termini of the viral genome. Disrupts TLR3 signaling by degrading the host adapter protein TICAM1/TRIF.</text>
</comment>
<comment type="function">
    <text evidence="4">RNA-directed RNA polymerase 3D-POL replicates genomic and antigenomic RNA by recognizing replications specific signals.</text>
</comment>
<comment type="catalytic activity">
    <reaction evidence="4 6">
        <text>RNA(n) + a ribonucleoside 5'-triphosphate = RNA(n+1) + diphosphate</text>
        <dbReference type="Rhea" id="RHEA:21248"/>
        <dbReference type="Rhea" id="RHEA-COMP:14527"/>
        <dbReference type="Rhea" id="RHEA-COMP:17342"/>
        <dbReference type="ChEBI" id="CHEBI:33019"/>
        <dbReference type="ChEBI" id="CHEBI:61557"/>
        <dbReference type="ChEBI" id="CHEBI:140395"/>
        <dbReference type="EC" id="2.7.7.48"/>
    </reaction>
</comment>
<comment type="catalytic activity">
    <reaction evidence="4">
        <text>a ribonucleoside 5'-triphosphate + H2O = a ribonucleoside 5'-diphosphate + phosphate + H(+)</text>
        <dbReference type="Rhea" id="RHEA:23680"/>
        <dbReference type="ChEBI" id="CHEBI:15377"/>
        <dbReference type="ChEBI" id="CHEBI:15378"/>
        <dbReference type="ChEBI" id="CHEBI:43474"/>
        <dbReference type="ChEBI" id="CHEBI:57930"/>
        <dbReference type="ChEBI" id="CHEBI:61557"/>
        <dbReference type="EC" id="3.6.1.15"/>
    </reaction>
</comment>
<comment type="catalytic activity">
    <reaction evidence="7">
        <text>Selective cleavage of Gln-|-Gly bond in the poliovirus polyprotein. In other picornavirus reactions Glu may be substituted for Gln, and Ser or Thr for Gly.</text>
        <dbReference type="EC" id="3.4.22.28"/>
    </reaction>
</comment>
<comment type="subunit">
    <molecule>Protein 2B</molecule>
    <text evidence="4">Homodimer. Homomultimer; probably interacts with membranes in a multimeric form. Seems to assemble into amyloid-like fibers.</text>
</comment>
<comment type="subunit">
    <molecule>Protein 3AB</molecule>
    <text evidence="4">Homodimer. Monomer. Interacts with protein 3CD.</text>
</comment>
<comment type="subunit">
    <molecule>Protein 3A</molecule>
    <text evidence="4">Interacts with host ACBD3 (By similarity).</text>
</comment>
<comment type="subunit">
    <molecule>Protein 3CD</molecule>
    <text evidence="4">Interacts with protein 3AB.</text>
</comment>
<comment type="subunit">
    <molecule>Protein 3ABC</molecule>
    <text evidence="4">Interacts with human MAVS.</text>
</comment>
<comment type="subunit">
    <molecule>Protease 3C</molecule>
    <text evidence="4">Homodimer; disulfide-linked.</text>
</comment>
<comment type="subunit">
    <molecule>Protein VP1-2A</molecule>
    <text evidence="4">Homopentamer. Homooligomer.</text>
</comment>
<comment type="subunit">
    <molecule>Capsid protein VP1</molecule>
    <text evidence="4">Interacts with capsid protein VP2. Interacts with capsid protein VP3.</text>
</comment>
<comment type="subunit">
    <molecule>Capsid protein VP2</molecule>
    <text evidence="4">Interacts with capsid protein VP1. Interacts with capsid protein VP3.</text>
</comment>
<comment type="subunit">
    <molecule>Capsid protein VP3</molecule>
    <text evidence="4">Interacts with capsid protein VP1. Interacts with capsid protein VP2.</text>
</comment>
<comment type="subcellular location">
    <molecule>Capsid protein VP2</molecule>
    <subcellularLocation>
        <location evidence="4">Virion</location>
    </subcellularLocation>
    <subcellularLocation>
        <location evidence="4">Host endosome</location>
        <location evidence="4">Host multivesicular body</location>
    </subcellularLocation>
    <text evidence="4">The egress of newly formed virions occurs through an exosome-like mechanism involving endosomal budding of viral capsids into multivesicular bodies.</text>
</comment>
<comment type="subcellular location">
    <molecule>Capsid protein VP3</molecule>
    <subcellularLocation>
        <location evidence="4">Virion</location>
    </subcellularLocation>
    <subcellularLocation>
        <location evidence="4">Host endosome</location>
        <location evidence="4">Host multivesicular body</location>
    </subcellularLocation>
    <text evidence="4">The egress of newly formed virions occurs through an exosome-like mechanism involving endosomal budding of viral capsids into multivesicular bodies.</text>
</comment>
<comment type="subcellular location">
    <molecule>Capsid protein VP1</molecule>
    <subcellularLocation>
        <location evidence="4">Virion</location>
    </subcellularLocation>
    <subcellularLocation>
        <location evidence="4">Host endosome</location>
        <location evidence="4">Host multivesicular body</location>
    </subcellularLocation>
    <text evidence="4">The egress of newly formed virions occurs through an exosome-like mechanism involving endosomal budding of viral capsids into multivesicular bodies.</text>
</comment>
<comment type="subcellular location">
    <molecule>Capsid protein VP4</molecule>
    <subcellularLocation>
        <location evidence="4">Virion</location>
    </subcellularLocation>
    <text evidence="4">Present in the full mature virion. The egress of newly formed virions occurs through an exosome-like mechanism involving endosomal budding of viral capsids into multivesicular bodies.</text>
</comment>
<comment type="subcellular location">
    <molecule>Protein 2B</molecule>
    <subcellularLocation>
        <location evidence="4">Host membrane</location>
        <topology evidence="4">Peripheral membrane protein</topology>
    </subcellularLocation>
    <text evidence="4">Probably localizes to intracellular membrane vesicles that are induced after virus infection as the site for viral RNA replication.</text>
</comment>
<comment type="subcellular location">
    <molecule>Protein 2C</molecule>
    <subcellularLocation>
        <location evidence="4">Host membrane</location>
        <topology evidence="4">Single-pass membrane protein</topology>
    </subcellularLocation>
    <text evidence="4">Probably localizes to intracellular membrane vesicles that are induced after virus infection as the site for viral RNA replication. May associate with membranes through a N-terminal amphipathic helix.</text>
</comment>
<comment type="subcellular location">
    <molecule>Protein 3ABC</molecule>
    <subcellularLocation>
        <location evidence="4">Host membrane</location>
        <topology evidence="5">Single-pass membrane protein</topology>
    </subcellularLocation>
    <subcellularLocation>
        <location evidence="4">Host mitochondrion outer membrane</location>
        <topology evidence="4">Single-pass membrane protein</topology>
    </subcellularLocation>
    <text evidence="4">Probably localizes to intracellular membrane vesicles that are induced after virus infection as the site for viral RNA replication.</text>
</comment>
<comment type="subcellular location">
    <molecule>Protein 3AB</molecule>
    <subcellularLocation>
        <location evidence="4">Host membrane</location>
        <topology evidence="5">Single-pass membrane protein</topology>
    </subcellularLocation>
    <text evidence="4">Probably localizes to intracellular membrane vesicles that are induced after virus infection as the site for viral RNA replication.</text>
</comment>
<comment type="subcellular location">
    <molecule>Protein 3A</molecule>
    <subcellularLocation>
        <location evidence="4">Host membrane</location>
        <topology evidence="5">Single-pass membrane protein</topology>
    </subcellularLocation>
    <text evidence="4">Probably localizes to intracellular membrane vesicles that are induced after virus infection as the site for viral RNA replication.</text>
</comment>
<comment type="subcellular location">
    <molecule>Viral protein genome-linked</molecule>
    <subcellularLocation>
        <location evidence="4">Virion</location>
    </subcellularLocation>
</comment>
<comment type="subcellular location">
    <molecule>Protease 3C</molecule>
    <subcellularLocation>
        <location evidence="4">Host cytoplasm</location>
    </subcellularLocation>
</comment>
<comment type="subcellular location">
    <molecule>RNA-directed RNA polymerase 3D-POL</molecule>
    <subcellularLocation>
        <location evidence="4">Host cytoplasmic vesicle membrane</location>
        <topology evidence="4">Peripheral membrane protein</topology>
        <orientation evidence="4">Cytoplasmic side</orientation>
    </subcellularLocation>
    <text evidence="4">Interacts with membranes in a complex with viral protein 3AB. Probably localizes to the surface of intracellular membrane vesicles that are induced after virus infection as the site for viral RNA replication. These vesicles are derived from the endoplasmic reticulum.</text>
</comment>
<comment type="domain">
    <molecule>Protein VP1-2A</molecule>
    <text evidence="4">The assembly signal 2A region mediates pentamerization of P1-2A.</text>
</comment>
<comment type="domain">
    <molecule>Genome polyprotein</molecule>
    <text evidence="4">Late-budding domains (L domains) are short sequence motifs essential for viral particle budding. They recruit proteins of the host ESCRT machinery (Endosomal Sorting Complex Required for Transport) or ESCRT-associated proteins. The genome polyprotein contains two L domains: a tandem of (L)YPX(n)L domain which is known to bind the PDCD6IP/ALIX adaptater protein.</text>
</comment>
<comment type="domain">
    <molecule>Capsid protein VP2</molecule>
    <text evidence="4">Late-budding domains (L domains) are short sequence motifs essential for viral particle budding. They recruit proteins of the host ESCRT machinery (Endosomal Sorting Complex Required for Transport) or ESCRT-associated proteins. Capsid protein VP2 contains two L domains: a tandem of (L)YPX(n)L domain which is known to bind the Alix adaptater protein.</text>
</comment>
<comment type="domain">
    <molecule>Protein 2B</molecule>
    <text evidence="4">The C-terminus displays a membrane-penetrating ability.</text>
</comment>
<comment type="PTM">
    <molecule>Genome polyprotein</molecule>
    <text evidence="4">Specific enzymatic cleavages by viral protease in vivo yield a variety of precursors and mature proteins. Polyprotein processing intermediates are produced, such as P1-2A which is a functional precursor of the structural proteins, VP0 which is a VP4-VP2 precursor, VP1-2A precursor, 3ABC precursor which is a stable and catalytically active precursor of 3A, 3B and 3C proteins, 3AB and 3CD precursors. The assembly signal 2A is removed from VP1-2A by a host protease, possibly host Cathepsin L. This cleavage occurs over a region of 3 amino-acids probably generating VP1 proteins with heterogeneous C-termini.</text>
</comment>
<comment type="PTM">
    <molecule>Capsid protein VP0</molecule>
    <text evidence="3">During virion maturation, immature virions are rendered infectious following cleavage of VP0 into VP4 and VP2. This maturation seems to be an autocatalytic event triggered by the presence of RNA in the capsid and is followed by a conformational change of the particle.</text>
</comment>
<comment type="PTM">
    <molecule>Protein VP1-2A</molecule>
    <text evidence="4">The assembly signal 2A is removed from VP1-2A by a host protease, possibly host Cathepsin L in naked virions. This cleavage does not occur in enveloped virions. This cleavage occurs over a region of 3 amino-acids probably generating VP1 proteins with heterogeneous C-termini.</text>
</comment>
<comment type="PTM">
    <molecule>Viral protein genome-linked</molecule>
    <text evidence="2">VPg is uridylylated prior to priming replication into VPg-pUpU.</text>
</comment>
<comment type="PTM">
    <molecule>Capsid protein VP4</molecule>
    <text evidence="4">Unlike other picornaviruses, does not seem to be myristoylated.</text>
</comment>
<comment type="miscellaneous">
    <molecule>Genome polyprotein</molecule>
    <text evidence="4">The need for an intact eIF4G factor for the initiation of translation of HAV results in an inability to shut off host protein synthesis by a mechanism similar to that of other picornaviruses.</text>
</comment>
<comment type="miscellaneous">
    <molecule>Genome polyprotein</molecule>
    <text evidence="4">During infection, enveloped virions (eHAV) are released from cells. These eHAV are cloaked in host-derived membranes and resemble exosomes. The membrane of eHAV is devoid of viral proteins and thus prevents their neutralization by antibodies. eHAV budding is dependent on ESCRT-associated proteins VPS4B and PDCD6IP/ALIX. eHAV are produced and released in the serum and plasma, but not in bile and feces which only contain the naked, nonenveloped virions. It is likely that eHAV also use HAVCR1 as a functional receptor to infect cells, an evolutionary trait that may enhance HAV infectivity.</text>
</comment>
<comment type="similarity">
    <text evidence="9">Belongs to the picornaviridae polyprotein family.</text>
</comment>
<comment type="caution">
    <text evidence="4">It is uncertain whether Met-1 or Met-3 is the initiator.</text>
</comment>
<feature type="chain" id="PRO_0000311062" description="Genome polyprotein">
    <location>
        <begin position="1"/>
        <end position="2052"/>
    </location>
</feature>
<feature type="chain" id="PRO_0000311063" description="Capsid protein VP0">
    <location>
        <begin position="1"/>
        <end position="245"/>
    </location>
</feature>
<feature type="chain" id="PRO_5000145525" description="Capsid protein VP4">
    <location>
        <begin position="1"/>
        <end position="23"/>
    </location>
</feature>
<feature type="chain" id="PRO_5000145526" description="Capsid protein VP2">
    <location>
        <begin position="24"/>
        <end position="245"/>
    </location>
</feature>
<feature type="chain" id="PRO_5000145527" description="Capsid protein VP3">
    <location>
        <begin position="246"/>
        <end position="491"/>
    </location>
</feature>
<feature type="chain" id="PRO_0000311064" description="Protein VP1-2A">
    <location>
        <begin position="492"/>
        <end position="830"/>
    </location>
</feature>
<feature type="chain" id="PRO_5000145528" description="Capsid protein VP1">
    <location>
        <begin position="492"/>
        <end position="759"/>
    </location>
</feature>
<feature type="chain" id="PRO_5000145529" description="Assembly signal 2A">
    <location>
        <begin position="760"/>
        <end position="830"/>
    </location>
</feature>
<feature type="chain" id="PRO_0000311065" description="Protein 2BC">
    <location>
        <begin position="831"/>
        <end position="1258"/>
    </location>
</feature>
<feature type="chain" id="PRO_5000145530" description="Protein 2B">
    <location>
        <begin position="831"/>
        <end position="1081"/>
    </location>
</feature>
<feature type="chain" id="PRO_5000145531" description="Protein 2C">
    <location>
        <begin position="1082"/>
        <end position="1258"/>
    </location>
</feature>
<feature type="chain" id="PRO_0000311066" description="Protein 3ABCD">
    <location>
        <begin position="1259"/>
        <end position="2052"/>
    </location>
</feature>
<feature type="chain" id="PRO_0000311067" description="Protein 3ABC">
    <location>
        <begin position="1259"/>
        <end position="1572"/>
    </location>
</feature>
<feature type="chain" id="PRO_0000311068" description="Protein 3AB">
    <location>
        <begin position="1259"/>
        <end position="1353"/>
    </location>
</feature>
<feature type="chain" id="PRO_5000145521" description="Protein 3A">
    <location>
        <begin position="1259"/>
        <end position="1330"/>
    </location>
</feature>
<feature type="chain" id="PRO_5000145522" description="Viral protein genome-linked">
    <location>
        <begin position="1331"/>
        <end position="1353"/>
    </location>
</feature>
<feature type="chain" id="PRO_0000311069" description="Protein 3CD">
    <location>
        <begin position="1354"/>
        <end position="2052"/>
    </location>
</feature>
<feature type="chain" id="PRO_5000145523" description="Protease 3C">
    <location>
        <begin position="1354"/>
        <end position="1572"/>
    </location>
</feature>
<feature type="chain" id="PRO_5000145524" description="RNA-directed RNA polymerase 3D-POL">
    <location>
        <begin position="1573"/>
        <end position="2052"/>
    </location>
</feature>
<feature type="transmembrane region" description="Helical" evidence="5">
    <location>
        <begin position="1005"/>
        <end position="1025"/>
    </location>
</feature>
<feature type="transmembrane region" description="Helical" evidence="5">
    <location>
        <begin position="1296"/>
        <end position="1316"/>
    </location>
</feature>
<feature type="domain" description="Peptidase C3" evidence="7">
    <location>
        <begin position="1348"/>
        <end position="1562"/>
    </location>
</feature>
<feature type="domain" description="RdRp catalytic" evidence="6">
    <location>
        <begin position="1810"/>
        <end position="1931"/>
    </location>
</feature>
<feature type="region of interest" description="Disordered" evidence="8">
    <location>
        <begin position="502"/>
        <end position="522"/>
    </location>
</feature>
<feature type="region of interest" description="Involved in P1-2A pentamerization" evidence="4">
    <location>
        <begin position="760"/>
        <end position="830"/>
    </location>
</feature>
<feature type="region of interest" description="Membrane-penetrating ability" evidence="4">
    <location>
        <begin position="1037"/>
        <end position="1064"/>
    </location>
</feature>
<feature type="coiled-coil region" evidence="5">
    <location>
        <begin position="1121"/>
        <end position="1146"/>
    </location>
</feature>
<feature type="short sequence motif" description="(L)YPX(n)L motif" evidence="4">
    <location>
        <begin position="167"/>
        <end position="171"/>
    </location>
</feature>
<feature type="short sequence motif" description="(L)YPX(n)L motif" evidence="4">
    <location>
        <begin position="200"/>
        <end position="205"/>
    </location>
</feature>
<feature type="active site" description="For protease 3C activity" evidence="7">
    <location>
        <position position="1397"/>
    </location>
</feature>
<feature type="active site" description="For protease 3C activity" evidence="7">
    <location>
        <position position="1437"/>
    </location>
</feature>
<feature type="active site" description="For protease 3C activity" evidence="7">
    <location>
        <position position="1525"/>
    </location>
</feature>
<feature type="site" description="Cleavage" evidence="5">
    <location>
        <begin position="23"/>
        <end position="24"/>
    </location>
</feature>
<feature type="site" description="Cleavage; by protease 3C" evidence="4">
    <location>
        <begin position="245"/>
        <end position="246"/>
    </location>
</feature>
<feature type="site" description="Cleavage; by protease 3C" evidence="4">
    <location>
        <begin position="491"/>
        <end position="492"/>
    </location>
</feature>
<feature type="site" description="Cleavage; partial; by host" evidence="4">
    <location>
        <begin position="759"/>
        <end position="760"/>
    </location>
</feature>
<feature type="site" description="Important for VP1 folding and capsid assembly" evidence="4">
    <location>
        <position position="763"/>
    </location>
</feature>
<feature type="site" description="Cleavage; by protease 3C" evidence="4">
    <location>
        <begin position="830"/>
        <end position="831"/>
    </location>
</feature>
<feature type="site" description="Cleavage; by protease 3C" evidence="4">
    <location>
        <begin position="1081"/>
        <end position="1082"/>
    </location>
</feature>
<feature type="site" description="Cleavage; by protease 3C" evidence="4">
    <location>
        <begin position="1258"/>
        <end position="1259"/>
    </location>
</feature>
<feature type="site" description="Cleavage; by protease 3C" evidence="4">
    <location>
        <begin position="1330"/>
        <end position="1331"/>
    </location>
</feature>
<feature type="site" description="Cleavage; by protease 3C" evidence="4">
    <location>
        <begin position="1353"/>
        <end position="1354"/>
    </location>
</feature>
<feature type="site" description="Cleavage; by protease 3C" evidence="4">
    <location>
        <begin position="1572"/>
        <end position="1573"/>
    </location>
</feature>
<feature type="modified residue" description="O-(5'-phospho-RNA)-tyrosine" evidence="1">
    <location>
        <position position="1333"/>
    </location>
</feature>
<feature type="disulfide bond" description="Interchain" evidence="4">
    <location>
        <position position="1377"/>
    </location>
</feature>
<feature type="non-consecutive residues" evidence="9">
    <location>
        <begin position="1161"/>
        <end position="1162"/>
    </location>
</feature>
<dbReference type="EC" id="3.6.1.15"/>
<dbReference type="EC" id="3.4.22.28" evidence="4"/>
<dbReference type="EC" id="2.7.7.48" evidence="4"/>
<dbReference type="EMBL" id="X15463">
    <property type="protein sequence ID" value="CAA33491.1"/>
    <property type="molecule type" value="Genomic_RNA"/>
</dbReference>
<dbReference type="EMBL" id="X15464">
    <property type="protein sequence ID" value="CAA33492.1"/>
    <property type="molecule type" value="Genomic_RNA"/>
</dbReference>
<dbReference type="EMBL" id="L07669">
    <property type="status" value="NOT_ANNOTATED_CDS"/>
    <property type="molecule type" value="Genomic_RNA"/>
</dbReference>
<dbReference type="SMR" id="Q05794"/>
<dbReference type="MEROPS" id="C03.005"/>
<dbReference type="GO" id="GO:0044162">
    <property type="term" value="C:host cell cytoplasmic vesicle membrane"/>
    <property type="evidence" value="ECO:0007669"/>
    <property type="project" value="UniProtKB-SubCell"/>
</dbReference>
<dbReference type="GO" id="GO:0044193">
    <property type="term" value="C:host cell mitochondrial outer membrane"/>
    <property type="evidence" value="ECO:0007669"/>
    <property type="project" value="UniProtKB-SubCell"/>
</dbReference>
<dbReference type="GO" id="GO:0072494">
    <property type="term" value="C:host multivesicular body"/>
    <property type="evidence" value="ECO:0007669"/>
    <property type="project" value="UniProtKB-SubCell"/>
</dbReference>
<dbReference type="GO" id="GO:0016020">
    <property type="term" value="C:membrane"/>
    <property type="evidence" value="ECO:0007669"/>
    <property type="project" value="UniProtKB-KW"/>
</dbReference>
<dbReference type="GO" id="GO:0039618">
    <property type="term" value="C:T=pseudo3 icosahedral viral capsid"/>
    <property type="evidence" value="ECO:0007669"/>
    <property type="project" value="UniProtKB-KW"/>
</dbReference>
<dbReference type="GO" id="GO:0005524">
    <property type="term" value="F:ATP binding"/>
    <property type="evidence" value="ECO:0007669"/>
    <property type="project" value="UniProtKB-KW"/>
</dbReference>
<dbReference type="GO" id="GO:0015267">
    <property type="term" value="F:channel activity"/>
    <property type="evidence" value="ECO:0007669"/>
    <property type="project" value="UniProtKB-KW"/>
</dbReference>
<dbReference type="GO" id="GO:0004197">
    <property type="term" value="F:cysteine-type endopeptidase activity"/>
    <property type="evidence" value="ECO:0007669"/>
    <property type="project" value="UniProtKB-EC"/>
</dbReference>
<dbReference type="GO" id="GO:0004386">
    <property type="term" value="F:helicase activity"/>
    <property type="evidence" value="ECO:0007669"/>
    <property type="project" value="UniProtKB-KW"/>
</dbReference>
<dbReference type="GO" id="GO:0017111">
    <property type="term" value="F:ribonucleoside triphosphate phosphatase activity"/>
    <property type="evidence" value="ECO:0007669"/>
    <property type="project" value="UniProtKB-EC"/>
</dbReference>
<dbReference type="GO" id="GO:0003723">
    <property type="term" value="F:RNA binding"/>
    <property type="evidence" value="ECO:0007669"/>
    <property type="project" value="UniProtKB-KW"/>
</dbReference>
<dbReference type="GO" id="GO:0003968">
    <property type="term" value="F:RNA-directed RNA polymerase activity"/>
    <property type="evidence" value="ECO:0007669"/>
    <property type="project" value="UniProtKB-KW"/>
</dbReference>
<dbReference type="GO" id="GO:0005198">
    <property type="term" value="F:structural molecule activity"/>
    <property type="evidence" value="ECO:0007669"/>
    <property type="project" value="InterPro"/>
</dbReference>
<dbReference type="GO" id="GO:0006351">
    <property type="term" value="P:DNA-templated transcription"/>
    <property type="evidence" value="ECO:0007669"/>
    <property type="project" value="InterPro"/>
</dbReference>
<dbReference type="GO" id="GO:0034220">
    <property type="term" value="P:monoatomic ion transmembrane transport"/>
    <property type="evidence" value="ECO:0007669"/>
    <property type="project" value="UniProtKB-KW"/>
</dbReference>
<dbReference type="GO" id="GO:0006508">
    <property type="term" value="P:proteolysis"/>
    <property type="evidence" value="ECO:0007669"/>
    <property type="project" value="UniProtKB-KW"/>
</dbReference>
<dbReference type="GO" id="GO:0046718">
    <property type="term" value="P:symbiont entry into host cell"/>
    <property type="evidence" value="ECO:0007669"/>
    <property type="project" value="UniProtKB-KW"/>
</dbReference>
<dbReference type="GO" id="GO:0039545">
    <property type="term" value="P:symbiont-mediated suppression of host cytoplasmic pattern recognition receptor signaling pathway via inhibition of MAVS activity"/>
    <property type="evidence" value="ECO:0007669"/>
    <property type="project" value="UniProtKB-KW"/>
</dbReference>
<dbReference type="GO" id="GO:0039694">
    <property type="term" value="P:viral RNA genome replication"/>
    <property type="evidence" value="ECO:0007669"/>
    <property type="project" value="InterPro"/>
</dbReference>
<dbReference type="GO" id="GO:0019062">
    <property type="term" value="P:virion attachment to host cell"/>
    <property type="evidence" value="ECO:0007669"/>
    <property type="project" value="UniProtKB-KW"/>
</dbReference>
<dbReference type="CDD" id="cd23215">
    <property type="entry name" value="Hepatovirus_RdRp"/>
    <property type="match status" value="1"/>
</dbReference>
<dbReference type="CDD" id="cd00205">
    <property type="entry name" value="rhv_like"/>
    <property type="match status" value="2"/>
</dbReference>
<dbReference type="FunFam" id="2.60.120.20:FF:000017">
    <property type="entry name" value="Genome polyprotein"/>
    <property type="match status" value="1"/>
</dbReference>
<dbReference type="FunFam" id="3.30.70.270:FF:000111">
    <property type="entry name" value="Genome polyprotein"/>
    <property type="match status" value="1"/>
</dbReference>
<dbReference type="Gene3D" id="1.20.960.20">
    <property type="match status" value="1"/>
</dbReference>
<dbReference type="Gene3D" id="2.60.120.20">
    <property type="match status" value="3"/>
</dbReference>
<dbReference type="Gene3D" id="3.30.70.270">
    <property type="match status" value="1"/>
</dbReference>
<dbReference type="Gene3D" id="2.40.10.10">
    <property type="entry name" value="Trypsin-like serine proteases"/>
    <property type="match status" value="2"/>
</dbReference>
<dbReference type="InterPro" id="IPR049133">
    <property type="entry name" value="2B_soluble"/>
</dbReference>
<dbReference type="InterPro" id="IPR043502">
    <property type="entry name" value="DNA/RNA_pol_sf"/>
</dbReference>
<dbReference type="InterPro" id="IPR024354">
    <property type="entry name" value="Hepatitis_A_VP1-2A"/>
</dbReference>
<dbReference type="InterPro" id="IPR044067">
    <property type="entry name" value="PCV_3C_PRO"/>
</dbReference>
<dbReference type="InterPro" id="IPR000199">
    <property type="entry name" value="Peptidase_C3A/C3B_picornavir"/>
</dbReference>
<dbReference type="InterPro" id="IPR009003">
    <property type="entry name" value="Peptidase_S1_PA"/>
</dbReference>
<dbReference type="InterPro" id="IPR043504">
    <property type="entry name" value="Peptidase_S1_PA_chymotrypsin"/>
</dbReference>
<dbReference type="InterPro" id="IPR001676">
    <property type="entry name" value="Picornavirus_capsid"/>
</dbReference>
<dbReference type="InterPro" id="IPR043128">
    <property type="entry name" value="Rev_trsase/Diguanyl_cyclase"/>
</dbReference>
<dbReference type="InterPro" id="IPR033703">
    <property type="entry name" value="Rhv-like"/>
</dbReference>
<dbReference type="InterPro" id="IPR001205">
    <property type="entry name" value="RNA-dir_pol_C"/>
</dbReference>
<dbReference type="InterPro" id="IPR007094">
    <property type="entry name" value="RNA-dir_pol_PSvirus"/>
</dbReference>
<dbReference type="InterPro" id="IPR029053">
    <property type="entry name" value="Viral_coat"/>
</dbReference>
<dbReference type="Pfam" id="PF20758">
    <property type="entry name" value="2B_soluble"/>
    <property type="match status" value="1"/>
</dbReference>
<dbReference type="Pfam" id="PF12944">
    <property type="entry name" value="HAV_VP"/>
    <property type="match status" value="1"/>
</dbReference>
<dbReference type="Pfam" id="PF00548">
    <property type="entry name" value="Peptidase_C3"/>
    <property type="match status" value="1"/>
</dbReference>
<dbReference type="Pfam" id="PF00680">
    <property type="entry name" value="RdRP_1"/>
    <property type="match status" value="1"/>
</dbReference>
<dbReference type="Pfam" id="PF00073">
    <property type="entry name" value="Rhv"/>
    <property type="match status" value="2"/>
</dbReference>
<dbReference type="SUPFAM" id="SSF56672">
    <property type="entry name" value="DNA/RNA polymerases"/>
    <property type="match status" value="1"/>
</dbReference>
<dbReference type="SUPFAM" id="SSF88633">
    <property type="entry name" value="Positive stranded ssRNA viruses"/>
    <property type="match status" value="3"/>
</dbReference>
<dbReference type="SUPFAM" id="SSF50494">
    <property type="entry name" value="Trypsin-like serine proteases"/>
    <property type="match status" value="1"/>
</dbReference>
<dbReference type="PROSITE" id="PS51874">
    <property type="entry name" value="PCV_3C_PRO"/>
    <property type="match status" value="1"/>
</dbReference>
<dbReference type="PROSITE" id="PS50507">
    <property type="entry name" value="RDRP_SSRNA_POS"/>
    <property type="match status" value="1"/>
</dbReference>
<keyword id="KW-0067">ATP-binding</keyword>
<keyword id="KW-0167">Capsid protein</keyword>
<keyword id="KW-0175">Coiled coil</keyword>
<keyword id="KW-0191">Covalent protein-RNA linkage</keyword>
<keyword id="KW-1015">Disulfide bond</keyword>
<keyword id="KW-0347">Helicase</keyword>
<keyword id="KW-1035">Host cytoplasm</keyword>
<keyword id="KW-1036">Host cytoplasmic vesicle</keyword>
<keyword id="KW-1039">Host endosome</keyword>
<keyword id="KW-1043">Host membrane</keyword>
<keyword id="KW-1045">Host mitochondrion</keyword>
<keyword id="KW-1047">Host mitochondrion outer membrane</keyword>
<keyword id="KW-0945">Host-virus interaction</keyword>
<keyword id="KW-0378">Hydrolase</keyword>
<keyword id="KW-1090">Inhibition of host innate immune response by virus</keyword>
<keyword id="KW-1097">Inhibition of host MAVS by virus</keyword>
<keyword id="KW-1113">Inhibition of host RLR pathway by virus</keyword>
<keyword id="KW-0922">Interferon antiviral system evasion</keyword>
<keyword id="KW-0407">Ion channel</keyword>
<keyword id="KW-0406">Ion transport</keyword>
<keyword id="KW-0472">Membrane</keyword>
<keyword id="KW-0547">Nucleotide-binding</keyword>
<keyword id="KW-0548">Nucleotidyltransferase</keyword>
<keyword id="KW-0597">Phosphoprotein</keyword>
<keyword id="KW-0645">Protease</keyword>
<keyword id="KW-0694">RNA-binding</keyword>
<keyword id="KW-0696">RNA-directed RNA polymerase</keyword>
<keyword id="KW-1143">T=pseudo3 icosahedral capsid protein</keyword>
<keyword id="KW-0788">Thiol protease</keyword>
<keyword id="KW-0808">Transferase</keyword>
<keyword id="KW-0812">Transmembrane</keyword>
<keyword id="KW-1133">Transmembrane helix</keyword>
<keyword id="KW-0813">Transport</keyword>
<keyword id="KW-1161">Viral attachment to host cell</keyword>
<keyword id="KW-0899">Viral immunoevasion</keyword>
<keyword id="KW-1182">Viral ion channel</keyword>
<keyword id="KW-0693">Viral RNA replication</keyword>
<keyword id="KW-0946">Virion</keyword>
<keyword id="KW-1160">Virus entry into host cell</keyword>
<protein>
    <recommendedName>
        <fullName>Genome polyprotein</fullName>
    </recommendedName>
    <component>
        <recommendedName>
            <fullName>Capsid protein VP0</fullName>
        </recommendedName>
        <alternativeName>
            <fullName>VP4-VP2</fullName>
        </alternativeName>
    </component>
    <component>
        <recommendedName>
            <fullName>Capsid protein VP4</fullName>
        </recommendedName>
        <alternativeName>
            <fullName>P1A</fullName>
        </alternativeName>
        <alternativeName>
            <fullName>Virion protein 4</fullName>
        </alternativeName>
    </component>
    <component>
        <recommendedName>
            <fullName>Capsid protein VP2</fullName>
        </recommendedName>
        <alternativeName>
            <fullName>P1B</fullName>
        </alternativeName>
        <alternativeName>
            <fullName>Virion protein 2</fullName>
        </alternativeName>
    </component>
    <component>
        <recommendedName>
            <fullName>Capsid protein VP3</fullName>
        </recommendedName>
        <alternativeName>
            <fullName>P1C</fullName>
        </alternativeName>
        <alternativeName>
            <fullName>Virion protein 3</fullName>
        </alternativeName>
    </component>
    <component>
        <recommendedName>
            <fullName>Protein VP1-2A</fullName>
        </recommendedName>
        <alternativeName>
            <fullName>VPX</fullName>
        </alternativeName>
    </component>
    <component>
        <recommendedName>
            <fullName>Capsid protein VP1</fullName>
        </recommendedName>
        <alternativeName>
            <fullName>P1D</fullName>
        </alternativeName>
        <alternativeName>
            <fullName>Virion protein 1</fullName>
        </alternativeName>
    </component>
    <component>
        <recommendedName>
            <fullName>Assembly signal 2A</fullName>
        </recommendedName>
        <alternativeName>
            <fullName evidence="4">pX</fullName>
        </alternativeName>
    </component>
    <component>
        <recommendedName>
            <fullName>Protein 2BC</fullName>
        </recommendedName>
    </component>
    <component>
        <recommendedName>
            <fullName>Protein 2B</fullName>
            <shortName>P2B</shortName>
        </recommendedName>
    </component>
    <component>
        <recommendedName>
            <fullName>Protein 2C</fullName>
            <shortName>P2C</shortName>
            <ecNumber>3.6.1.15</ecNumber>
        </recommendedName>
    </component>
    <component>
        <recommendedName>
            <fullName>Protein 3ABCD</fullName>
            <shortName>P3</shortName>
        </recommendedName>
    </component>
    <component>
        <recommendedName>
            <fullName>Protein 3ABC</fullName>
        </recommendedName>
    </component>
    <component>
        <recommendedName>
            <fullName>Protein 3AB</fullName>
        </recommendedName>
    </component>
    <component>
        <recommendedName>
            <fullName>Protein 3A</fullName>
            <shortName>P3A</shortName>
        </recommendedName>
    </component>
    <component>
        <recommendedName>
            <fullName>Viral protein genome-linked</fullName>
            <shortName>VPg</shortName>
        </recommendedName>
        <alternativeName>
            <fullName>Protein 3B</fullName>
            <shortName>P3B</shortName>
        </alternativeName>
    </component>
    <component>
        <recommendedName>
            <fullName>Protein 3CD</fullName>
        </recommendedName>
    </component>
    <component>
        <recommendedName>
            <fullName>Protease 3C</fullName>
            <shortName>P3C</shortName>
            <ecNumber evidence="4">3.4.22.28</ecNumber>
        </recommendedName>
        <alternativeName>
            <fullName>Picornain 3C</fullName>
        </alternativeName>
    </component>
    <component>
        <recommendedName>
            <fullName>RNA-directed RNA polymerase 3D-POL</fullName>
            <shortName>P3D-POL</shortName>
            <ecNumber evidence="4">2.7.7.48</ecNumber>
        </recommendedName>
    </component>
</protein>
<evidence type="ECO:0000250" key="1"/>
<evidence type="ECO:0000250" key="2">
    <source>
        <dbReference type="UniProtKB" id="P03300"/>
    </source>
</evidence>
<evidence type="ECO:0000250" key="3">
    <source>
        <dbReference type="UniProtKB" id="P03303"/>
    </source>
</evidence>
<evidence type="ECO:0000250" key="4">
    <source>
        <dbReference type="UniProtKB" id="P08617"/>
    </source>
</evidence>
<evidence type="ECO:0000255" key="5"/>
<evidence type="ECO:0000255" key="6">
    <source>
        <dbReference type="PROSITE-ProRule" id="PRU00539"/>
    </source>
</evidence>
<evidence type="ECO:0000255" key="7">
    <source>
        <dbReference type="PROSITE-ProRule" id="PRU01222"/>
    </source>
</evidence>
<evidence type="ECO:0000256" key="8">
    <source>
        <dbReference type="SAM" id="MobiDB-lite"/>
    </source>
</evidence>
<evidence type="ECO:0000305" key="9"/>
<proteinExistence type="inferred from homology"/>
<reference key="1">
    <citation type="journal article" date="1987" name="Mol. Genet. Microbiol. Virol.">
        <title>Cloning and expression of hepatitis A virus genome in E. coli cells.</title>
        <authorList>
            <person name="Sverdlov S.D."/>
            <person name="Tsarev S.A."/>
            <person name="Markova S.V."/>
            <person name="Vasilenko S.K."/>
            <person name="Chizhikov V.E."/>
            <person name="Petrov N.A."/>
            <person name="Kusov Y.Y."/>
            <person name="Nastashenko T.A."/>
            <person name="Balayan M.S."/>
        </authorList>
    </citation>
    <scope>NUCLEOTIDE SEQUENCE [GENOMIC RNA]</scope>
</reference>
<reference key="2">
    <citation type="journal article" date="1985" name="Dokl. Akad. Nauk SSSR">
        <title>Sequence of 3372 RNA nucleotide links in the hepatitis A virus coding for capsid VP4-VP1 and nonstructural proteins.</title>
        <authorList>
            <person name="Ovchinnikov Y.A."/>
            <person name="Sverdlov E.D."/>
            <person name="Tsarev S.A."/>
            <person name="Arsenian S.G."/>
            <person name="Rokhlina T.O."/>
        </authorList>
    </citation>
    <scope>NUCLEOTIDE SEQUENCE [GENOMIC RNA] OF 1-906</scope>
</reference>
<reference key="3">
    <citation type="journal article" date="1992" name="J. Gen. Virol.">
        <title>Genetic relatedness of hepatitis A virus strains recovered from different geographical regions.</title>
        <authorList>
            <person name="Robertson B.H."/>
            <person name="Jansen R.W."/>
            <person name="Khanna B."/>
            <person name="Totsuka A."/>
            <person name="Nainan O.V."/>
            <person name="Siegl G."/>
            <person name="Widell A."/>
            <person name="Margolis H.S."/>
            <person name="Isomura S."/>
            <person name="Ito K."/>
            <person name="Ishizu T."/>
            <person name="Moritsugu Y."/>
            <person name="Lemon S.M."/>
        </authorList>
    </citation>
    <scope>NUCLEOTIDE SEQUENCE [GENOMIC RNA] OF 758-813</scope>
</reference>
<organism>
    <name type="scientific">Human hepatitis A virus genotype IA (isolate HAS-15)</name>
    <name type="common">HHAV</name>
    <name type="synonym">Human hepatitis A virus (isolate Human/Arizona/HAS-15/1979)</name>
    <dbReference type="NCBI Taxonomy" id="470424"/>
    <lineage>
        <taxon>Viruses</taxon>
        <taxon>Riboviria</taxon>
        <taxon>Orthornavirae</taxon>
        <taxon>Pisuviricota</taxon>
        <taxon>Pisoniviricetes</taxon>
        <taxon>Picornavirales</taxon>
        <taxon>Picornaviridae</taxon>
        <taxon>Heptrevirinae</taxon>
        <taxon>Hepatovirus</taxon>
        <taxon>Hepatovirus ahepa</taxon>
        <taxon>Hepatovirus A</taxon>
    </lineage>
</organism>